<keyword id="KW-0479">Metal-binding</keyword>
<keyword id="KW-0687">Ribonucleoprotein</keyword>
<keyword id="KW-0689">Ribosomal protein</keyword>
<keyword id="KW-0694">RNA-binding</keyword>
<keyword id="KW-0699">rRNA-binding</keyword>
<keyword id="KW-0862">Zinc</keyword>
<gene>
    <name evidence="1" type="primary">rpmE</name>
    <name type="ordered locus">RBAM_034230</name>
</gene>
<dbReference type="EMBL" id="CP000560">
    <property type="protein sequence ID" value="ABS75752.1"/>
    <property type="molecule type" value="Genomic_DNA"/>
</dbReference>
<dbReference type="RefSeq" id="WP_003151132.1">
    <property type="nucleotide sequence ID" value="NC_009725.2"/>
</dbReference>
<dbReference type="SMR" id="A7Z9S6"/>
<dbReference type="GeneID" id="93082567"/>
<dbReference type="KEGG" id="bay:RBAM_034230"/>
<dbReference type="HOGENOM" id="CLU_114306_4_3_9"/>
<dbReference type="Proteomes" id="UP000001120">
    <property type="component" value="Chromosome"/>
</dbReference>
<dbReference type="GO" id="GO:1990904">
    <property type="term" value="C:ribonucleoprotein complex"/>
    <property type="evidence" value="ECO:0007669"/>
    <property type="project" value="UniProtKB-KW"/>
</dbReference>
<dbReference type="GO" id="GO:0005840">
    <property type="term" value="C:ribosome"/>
    <property type="evidence" value="ECO:0007669"/>
    <property type="project" value="UniProtKB-KW"/>
</dbReference>
<dbReference type="GO" id="GO:0046872">
    <property type="term" value="F:metal ion binding"/>
    <property type="evidence" value="ECO:0007669"/>
    <property type="project" value="UniProtKB-KW"/>
</dbReference>
<dbReference type="GO" id="GO:0019843">
    <property type="term" value="F:rRNA binding"/>
    <property type="evidence" value="ECO:0007669"/>
    <property type="project" value="UniProtKB-KW"/>
</dbReference>
<dbReference type="GO" id="GO:0003735">
    <property type="term" value="F:structural constituent of ribosome"/>
    <property type="evidence" value="ECO:0007669"/>
    <property type="project" value="InterPro"/>
</dbReference>
<dbReference type="GO" id="GO:0006412">
    <property type="term" value="P:translation"/>
    <property type="evidence" value="ECO:0007669"/>
    <property type="project" value="UniProtKB-UniRule"/>
</dbReference>
<dbReference type="Gene3D" id="4.10.830.30">
    <property type="entry name" value="Ribosomal protein L31"/>
    <property type="match status" value="1"/>
</dbReference>
<dbReference type="HAMAP" id="MF_00501">
    <property type="entry name" value="Ribosomal_bL31_1"/>
    <property type="match status" value="1"/>
</dbReference>
<dbReference type="InterPro" id="IPR034704">
    <property type="entry name" value="Ribosomal_bL28/bL31-like_sf"/>
</dbReference>
<dbReference type="InterPro" id="IPR002150">
    <property type="entry name" value="Ribosomal_bL31"/>
</dbReference>
<dbReference type="InterPro" id="IPR027491">
    <property type="entry name" value="Ribosomal_bL31_A"/>
</dbReference>
<dbReference type="InterPro" id="IPR042105">
    <property type="entry name" value="Ribosomal_bL31_sf"/>
</dbReference>
<dbReference type="NCBIfam" id="TIGR00105">
    <property type="entry name" value="L31"/>
    <property type="match status" value="1"/>
</dbReference>
<dbReference type="NCBIfam" id="NF000612">
    <property type="entry name" value="PRK00019.1"/>
    <property type="match status" value="1"/>
</dbReference>
<dbReference type="NCBIfam" id="NF001809">
    <property type="entry name" value="PRK00528.1"/>
    <property type="match status" value="1"/>
</dbReference>
<dbReference type="PANTHER" id="PTHR33280">
    <property type="entry name" value="50S RIBOSOMAL PROTEIN L31, CHLOROPLASTIC"/>
    <property type="match status" value="1"/>
</dbReference>
<dbReference type="PANTHER" id="PTHR33280:SF1">
    <property type="entry name" value="LARGE RIBOSOMAL SUBUNIT PROTEIN BL31C"/>
    <property type="match status" value="1"/>
</dbReference>
<dbReference type="Pfam" id="PF01197">
    <property type="entry name" value="Ribosomal_L31"/>
    <property type="match status" value="1"/>
</dbReference>
<dbReference type="PRINTS" id="PR01249">
    <property type="entry name" value="RIBOSOMALL31"/>
</dbReference>
<dbReference type="SUPFAM" id="SSF143800">
    <property type="entry name" value="L28p-like"/>
    <property type="match status" value="1"/>
</dbReference>
<dbReference type="PROSITE" id="PS01143">
    <property type="entry name" value="RIBOSOMAL_L31"/>
    <property type="match status" value="1"/>
</dbReference>
<evidence type="ECO:0000255" key="1">
    <source>
        <dbReference type="HAMAP-Rule" id="MF_00501"/>
    </source>
</evidence>
<evidence type="ECO:0000305" key="2"/>
<comment type="function">
    <text evidence="1">Binds the 23S rRNA.</text>
</comment>
<comment type="cofactor">
    <cofactor evidence="1">
        <name>Zn(2+)</name>
        <dbReference type="ChEBI" id="CHEBI:29105"/>
    </cofactor>
    <text evidence="1">Binds 1 zinc ion per subunit.</text>
</comment>
<comment type="subunit">
    <text evidence="1">Part of the 50S ribosomal subunit.</text>
</comment>
<comment type="similarity">
    <text evidence="1">Belongs to the bacterial ribosomal protein bL31 family. Type A subfamily.</text>
</comment>
<organism>
    <name type="scientific">Bacillus velezensis (strain DSM 23117 / BGSC 10A6 / LMG 26770 / FZB42)</name>
    <name type="common">Bacillus amyloliquefaciens subsp. plantarum</name>
    <dbReference type="NCBI Taxonomy" id="326423"/>
    <lineage>
        <taxon>Bacteria</taxon>
        <taxon>Bacillati</taxon>
        <taxon>Bacillota</taxon>
        <taxon>Bacilli</taxon>
        <taxon>Bacillales</taxon>
        <taxon>Bacillaceae</taxon>
        <taxon>Bacillus</taxon>
        <taxon>Bacillus amyloliquefaciens group</taxon>
    </lineage>
</organism>
<accession>A7Z9S6</accession>
<sequence>MKAGIHPNFKKATVKCACGNEFETGSVKEEVRVEICSECHPFYTGRQKFASADGRVDRFNKKYGLK</sequence>
<proteinExistence type="inferred from homology"/>
<name>RL31_BACVZ</name>
<feature type="chain" id="PRO_1000126564" description="Large ribosomal subunit protein bL31">
    <location>
        <begin position="1"/>
        <end position="66"/>
    </location>
</feature>
<feature type="binding site" evidence="1">
    <location>
        <position position="16"/>
    </location>
    <ligand>
        <name>Zn(2+)</name>
        <dbReference type="ChEBI" id="CHEBI:29105"/>
    </ligand>
</feature>
<feature type="binding site" evidence="1">
    <location>
        <position position="18"/>
    </location>
    <ligand>
        <name>Zn(2+)</name>
        <dbReference type="ChEBI" id="CHEBI:29105"/>
    </ligand>
</feature>
<feature type="binding site" evidence="1">
    <location>
        <position position="36"/>
    </location>
    <ligand>
        <name>Zn(2+)</name>
        <dbReference type="ChEBI" id="CHEBI:29105"/>
    </ligand>
</feature>
<feature type="binding site" evidence="1">
    <location>
        <position position="39"/>
    </location>
    <ligand>
        <name>Zn(2+)</name>
        <dbReference type="ChEBI" id="CHEBI:29105"/>
    </ligand>
</feature>
<protein>
    <recommendedName>
        <fullName evidence="1">Large ribosomal subunit protein bL31</fullName>
    </recommendedName>
    <alternativeName>
        <fullName evidence="2">50S ribosomal protein L31</fullName>
    </alternativeName>
</protein>
<reference key="1">
    <citation type="journal article" date="2007" name="Nat. Biotechnol.">
        <title>Comparative analysis of the complete genome sequence of the plant growth-promoting bacterium Bacillus amyloliquefaciens FZB42.</title>
        <authorList>
            <person name="Chen X.H."/>
            <person name="Koumoutsi A."/>
            <person name="Scholz R."/>
            <person name="Eisenreich A."/>
            <person name="Schneider K."/>
            <person name="Heinemeyer I."/>
            <person name="Morgenstern B."/>
            <person name="Voss B."/>
            <person name="Hess W.R."/>
            <person name="Reva O."/>
            <person name="Junge H."/>
            <person name="Voigt B."/>
            <person name="Jungblut P.R."/>
            <person name="Vater J."/>
            <person name="Suessmuth R."/>
            <person name="Liesegang H."/>
            <person name="Strittmatter A."/>
            <person name="Gottschalk G."/>
            <person name="Borriss R."/>
        </authorList>
    </citation>
    <scope>NUCLEOTIDE SEQUENCE [LARGE SCALE GENOMIC DNA]</scope>
    <source>
        <strain>DSM 23117 / BGSC 10A6 / LMG 26770 / FZB42</strain>
    </source>
</reference>